<organism>
    <name type="scientific">Oryza sativa subsp. japonica</name>
    <name type="common">Rice</name>
    <dbReference type="NCBI Taxonomy" id="39947"/>
    <lineage>
        <taxon>Eukaryota</taxon>
        <taxon>Viridiplantae</taxon>
        <taxon>Streptophyta</taxon>
        <taxon>Embryophyta</taxon>
        <taxon>Tracheophyta</taxon>
        <taxon>Spermatophyta</taxon>
        <taxon>Magnoliopsida</taxon>
        <taxon>Liliopsida</taxon>
        <taxon>Poales</taxon>
        <taxon>Poaceae</taxon>
        <taxon>BOP clade</taxon>
        <taxon>Oryzoideae</taxon>
        <taxon>Oryzeae</taxon>
        <taxon>Oryzinae</taxon>
        <taxon>Oryza</taxon>
        <taxon>Oryza sativa</taxon>
    </lineage>
</organism>
<dbReference type="EMBL" id="AC137991">
    <property type="protein sequence ID" value="AAS07324.1"/>
    <property type="molecule type" value="Genomic_DNA"/>
</dbReference>
<dbReference type="EMBL" id="AC137991">
    <property type="protein sequence ID" value="AAS07325.1"/>
    <property type="molecule type" value="Genomic_DNA"/>
</dbReference>
<dbReference type="EMBL" id="DP000009">
    <property type="protein sequence ID" value="ABF98039.1"/>
    <property type="molecule type" value="Genomic_DNA"/>
</dbReference>
<dbReference type="EMBL" id="DP000009">
    <property type="protein sequence ID" value="ABF98041.1"/>
    <property type="molecule type" value="Genomic_DNA"/>
</dbReference>
<dbReference type="EMBL" id="AP008209">
    <property type="protein sequence ID" value="BAH92302.1"/>
    <property type="status" value="ALT_SEQ"/>
    <property type="molecule type" value="Genomic_DNA"/>
</dbReference>
<dbReference type="EMBL" id="AP014959">
    <property type="protein sequence ID" value="BAS85618.1"/>
    <property type="molecule type" value="Genomic_DNA"/>
</dbReference>
<dbReference type="EMBL" id="AK105347">
    <property type="protein sequence ID" value="BAG97202.1"/>
    <property type="molecule type" value="mRNA"/>
</dbReference>
<dbReference type="SMR" id="Q75GX9"/>
<dbReference type="FunCoup" id="Q75GX9">
    <property type="interactions" value="2069"/>
</dbReference>
<dbReference type="STRING" id="39947.Q75GX9"/>
<dbReference type="Allergome" id="9526">
    <property type="allergen name" value="Ory s GLP63"/>
</dbReference>
<dbReference type="PaxDb" id="39947-Q75GX9"/>
<dbReference type="KEGG" id="dosa:Os03g0663800"/>
<dbReference type="eggNOG" id="ENOG502QQEP">
    <property type="taxonomic scope" value="Eukaryota"/>
</dbReference>
<dbReference type="InParanoid" id="Q75GX9"/>
<dbReference type="OMA" id="PWHQGAR"/>
<dbReference type="Proteomes" id="UP000000763">
    <property type="component" value="Chromosome 3"/>
</dbReference>
<dbReference type="Proteomes" id="UP000059680">
    <property type="component" value="Chromosome 3"/>
</dbReference>
<dbReference type="GO" id="GO:0005576">
    <property type="term" value="C:extracellular region"/>
    <property type="evidence" value="ECO:0007669"/>
    <property type="project" value="UniProtKB-SubCell"/>
</dbReference>
<dbReference type="GO" id="GO:0019863">
    <property type="term" value="F:IgE binding"/>
    <property type="evidence" value="ECO:0000314"/>
    <property type="project" value="UniProtKB"/>
</dbReference>
<dbReference type="GO" id="GO:0045735">
    <property type="term" value="F:nutrient reservoir activity"/>
    <property type="evidence" value="ECO:0007669"/>
    <property type="project" value="UniProtKB-KW"/>
</dbReference>
<dbReference type="CDD" id="cd02245">
    <property type="entry name" value="cupin_7S_vicilin-like_C"/>
    <property type="match status" value="1"/>
</dbReference>
<dbReference type="CDD" id="cd02244">
    <property type="entry name" value="cupin_7S_vicilin-like_N"/>
    <property type="match status" value="1"/>
</dbReference>
<dbReference type="FunFam" id="2.60.120.10:FF:000145">
    <property type="entry name" value="Vicilin-like antimicrobial peptides 2-2"/>
    <property type="match status" value="1"/>
</dbReference>
<dbReference type="FunFam" id="2.60.120.10:FF:000173">
    <property type="entry name" value="Vicilin-like antimicrobial peptides 2-3"/>
    <property type="match status" value="1"/>
</dbReference>
<dbReference type="Gene3D" id="2.60.120.10">
    <property type="entry name" value="Jelly Rolls"/>
    <property type="match status" value="2"/>
</dbReference>
<dbReference type="InterPro" id="IPR006045">
    <property type="entry name" value="Cupin_1"/>
</dbReference>
<dbReference type="InterPro" id="IPR014710">
    <property type="entry name" value="RmlC-like_jellyroll"/>
</dbReference>
<dbReference type="InterPro" id="IPR011051">
    <property type="entry name" value="RmlC_Cupin_sf"/>
</dbReference>
<dbReference type="InterPro" id="IPR050253">
    <property type="entry name" value="Seed_Storage-Functional"/>
</dbReference>
<dbReference type="PANTHER" id="PTHR31189:SF79">
    <property type="entry name" value="63 KDA GLOBULIN-LIKE PROTEIN"/>
    <property type="match status" value="1"/>
</dbReference>
<dbReference type="PANTHER" id="PTHR31189">
    <property type="entry name" value="OS03G0336100 PROTEIN-RELATED"/>
    <property type="match status" value="1"/>
</dbReference>
<dbReference type="Pfam" id="PF00190">
    <property type="entry name" value="Cupin_1"/>
    <property type="match status" value="2"/>
</dbReference>
<dbReference type="SMART" id="SM00835">
    <property type="entry name" value="Cupin_1"/>
    <property type="match status" value="2"/>
</dbReference>
<dbReference type="SUPFAM" id="SSF51182">
    <property type="entry name" value="RmlC-like cupins"/>
    <property type="match status" value="1"/>
</dbReference>
<proteinExistence type="evidence at protein level"/>
<reference key="1">
    <citation type="journal article" date="2005" name="Genome Res.">
        <title>Sequence, annotation, and analysis of synteny between rice chromosome 3 and diverged grass species.</title>
        <authorList>
            <consortium name="The rice chromosome 3 sequencing consortium"/>
            <person name="Buell C.R."/>
            <person name="Yuan Q."/>
            <person name="Ouyang S."/>
            <person name="Liu J."/>
            <person name="Zhu W."/>
            <person name="Wang A."/>
            <person name="Maiti R."/>
            <person name="Haas B."/>
            <person name="Wortman J."/>
            <person name="Pertea M."/>
            <person name="Jones K.M."/>
            <person name="Kim M."/>
            <person name="Overton L."/>
            <person name="Tsitrin T."/>
            <person name="Fadrosh D."/>
            <person name="Bera J."/>
            <person name="Weaver B."/>
            <person name="Jin S."/>
            <person name="Johri S."/>
            <person name="Reardon M."/>
            <person name="Webb K."/>
            <person name="Hill J."/>
            <person name="Moffat K."/>
            <person name="Tallon L."/>
            <person name="Van Aken S."/>
            <person name="Lewis M."/>
            <person name="Utterback T."/>
            <person name="Feldblyum T."/>
            <person name="Zismann V."/>
            <person name="Iobst S."/>
            <person name="Hsiao J."/>
            <person name="de Vazeille A.R."/>
            <person name="Salzberg S.L."/>
            <person name="White O."/>
            <person name="Fraser C.M."/>
            <person name="Yu Y."/>
            <person name="Kim H."/>
            <person name="Rambo T."/>
            <person name="Currie J."/>
            <person name="Collura K."/>
            <person name="Kernodle-Thompson S."/>
            <person name="Wei F."/>
            <person name="Kudrna K."/>
            <person name="Ammiraju J.S.S."/>
            <person name="Luo M."/>
            <person name="Goicoechea J.L."/>
            <person name="Wing R.A."/>
            <person name="Henry D."/>
            <person name="Oates R."/>
            <person name="Palmer M."/>
            <person name="Pries G."/>
            <person name="Saski C."/>
            <person name="Simmons J."/>
            <person name="Soderlund C."/>
            <person name="Nelson W."/>
            <person name="de la Bastide M."/>
            <person name="Spiegel L."/>
            <person name="Nascimento L."/>
            <person name="Huang E."/>
            <person name="Preston R."/>
            <person name="Zutavern T."/>
            <person name="Palmer L."/>
            <person name="O'Shaughnessy A."/>
            <person name="Dike S."/>
            <person name="McCombie W.R."/>
            <person name="Minx P."/>
            <person name="Cordum H."/>
            <person name="Wilson R."/>
            <person name="Jin W."/>
            <person name="Lee H.R."/>
            <person name="Jiang J."/>
            <person name="Jackson S."/>
        </authorList>
    </citation>
    <scope>NUCLEOTIDE SEQUENCE [LARGE SCALE GENOMIC DNA]</scope>
    <source>
        <strain>cv. Nipponbare</strain>
    </source>
</reference>
<reference key="2">
    <citation type="journal article" date="2005" name="Nature">
        <title>The map-based sequence of the rice genome.</title>
        <authorList>
            <consortium name="International rice genome sequencing project (IRGSP)"/>
        </authorList>
    </citation>
    <scope>NUCLEOTIDE SEQUENCE [LARGE SCALE GENOMIC DNA]</scope>
    <source>
        <strain>cv. Nipponbare</strain>
    </source>
</reference>
<reference key="3">
    <citation type="journal article" date="2008" name="Nucleic Acids Res.">
        <title>The rice annotation project database (RAP-DB): 2008 update.</title>
        <authorList>
            <consortium name="The rice annotation project (RAP)"/>
        </authorList>
    </citation>
    <scope>GENOME REANNOTATION</scope>
    <source>
        <strain>cv. Nipponbare</strain>
    </source>
</reference>
<reference key="4">
    <citation type="journal article" date="2013" name="Rice">
        <title>Improvement of the Oryza sativa Nipponbare reference genome using next generation sequence and optical map data.</title>
        <authorList>
            <person name="Kawahara Y."/>
            <person name="de la Bastide M."/>
            <person name="Hamilton J.P."/>
            <person name="Kanamori H."/>
            <person name="McCombie W.R."/>
            <person name="Ouyang S."/>
            <person name="Schwartz D.C."/>
            <person name="Tanaka T."/>
            <person name="Wu J."/>
            <person name="Zhou S."/>
            <person name="Childs K.L."/>
            <person name="Davidson R.M."/>
            <person name="Lin H."/>
            <person name="Quesada-Ocampo L."/>
            <person name="Vaillancourt B."/>
            <person name="Sakai H."/>
            <person name="Lee S.S."/>
            <person name="Kim J."/>
            <person name="Numa H."/>
            <person name="Itoh T."/>
            <person name="Buell C.R."/>
            <person name="Matsumoto T."/>
        </authorList>
    </citation>
    <scope>GENOME REANNOTATION</scope>
    <source>
        <strain>cv. Nipponbare</strain>
    </source>
</reference>
<reference key="5">
    <citation type="journal article" date="2003" name="Science">
        <title>Collection, mapping, and annotation of over 28,000 cDNA clones from japonica rice.</title>
        <authorList>
            <consortium name="The rice full-length cDNA consortium"/>
        </authorList>
    </citation>
    <scope>NUCLEOTIDE SEQUENCE [LARGE SCALE MRNA] (ISOFORM 2)</scope>
    <source>
        <strain>cv. Nipponbare</strain>
    </source>
</reference>
<reference key="6">
    <citation type="journal article" date="2011" name="Regul. Toxicol. Pharmacol.">
        <title>Proteomic analysis of known and candidate rice allergens between non-transgenic and transgenic plants.</title>
        <authorList>
            <person name="Satoh R."/>
            <person name="Nakamura R."/>
            <person name="Komatsu A."/>
            <person name="Oshima M."/>
            <person name="Teshima R."/>
        </authorList>
    </citation>
    <scope>IDENTIFICATION BY MASS SPECTROMETRY</scope>
    <scope>ALLERGEN</scope>
</reference>
<reference key="7">
    <citation type="journal article" date="2013" name="J. Proteome Res.">
        <title>MucoRice-cholera toxin B-subunit, a rice-based oral cholera vaccine, down-regulates the expression of alpha-amylase/trypsin inhibitor-like protein family as major rice allergens.</title>
        <authorList>
            <person name="Kurokawa S."/>
            <person name="Nakamura R."/>
            <person name="Mejima M."/>
            <person name="Kozuka-Hata H."/>
            <person name="Kuroda M."/>
            <person name="Takeyama N."/>
            <person name="Oyama M."/>
            <person name="Satoh S."/>
            <person name="Kiyono H."/>
            <person name="Masumura T."/>
            <person name="Teshima R."/>
            <person name="Yuki Y."/>
        </authorList>
    </citation>
    <scope>IDENTIFICATION BY MASS SPECTROMETRY</scope>
    <scope>ALLERGEN</scope>
</reference>
<accession>Q75GX9</accession>
<accession>C7J006</accession>
<accession>Q75GX8</accession>
<name>GLB63_ORYSJ</name>
<gene>
    <name evidence="9" type="ordered locus">Os03g0663800</name>
    <name evidence="8" type="ordered locus">LOC_Os03g46100</name>
    <name evidence="7" type="ORF">OSJNBa0034D21.12</name>
</gene>
<feature type="signal peptide" evidence="1">
    <location>
        <begin position="1"/>
        <end position="23"/>
    </location>
</feature>
<feature type="chain" id="PRO_5007212835" description="63 kDa globulin-like protein">
    <location>
        <begin position="24"/>
        <end position="562"/>
    </location>
</feature>
<feature type="domain" description="Cupin type-1 1" evidence="1">
    <location>
        <begin position="106"/>
        <end position="264"/>
    </location>
</feature>
<feature type="domain" description="Cupin type-1 2" evidence="1">
    <location>
        <begin position="312"/>
        <end position="507"/>
    </location>
</feature>
<feature type="region of interest" description="Disordered" evidence="3">
    <location>
        <begin position="63"/>
        <end position="103"/>
    </location>
</feature>
<feature type="region of interest" description="Disordered" evidence="3">
    <location>
        <begin position="383"/>
        <end position="430"/>
    </location>
</feature>
<feature type="region of interest" description="Disordered" evidence="3">
    <location>
        <begin position="516"/>
        <end position="550"/>
    </location>
</feature>
<feature type="compositionally biased region" description="Basic and acidic residues" evidence="3">
    <location>
        <begin position="63"/>
        <end position="88"/>
    </location>
</feature>
<feature type="compositionally biased region" description="Basic and acidic residues" evidence="3">
    <location>
        <begin position="390"/>
        <end position="408"/>
    </location>
</feature>
<feature type="compositionally biased region" description="Acidic residues" evidence="3">
    <location>
        <begin position="409"/>
        <end position="427"/>
    </location>
</feature>
<feature type="glycosylation site" description="N-linked (GlcNAc...) asparagine" evidence="2">
    <location>
        <position position="350"/>
    </location>
</feature>
<feature type="splice variant" id="VSP_058381" description="In isoform 2.">
    <original>FFFAPGGRNPESFLSSFSKGVQRAAFKISEEKLEKLLGKQDKGVIIRASEEQVRELRRHASEGGHGPHWPLPPFGESSRGPFNILEQRPRFANRHGRLYEADARSFHDLAEHDIRVAVVNITAGSMNAPFYNTRSVKVAYVLDGEGEAEIVCPHLSRGGRGGESEERRRERGKGKWREEEEEEEEQQKGQEEEEEEQVGQGYETIRARLSRGTVFVVPSGHPIVVTSSRDSTLQIVCFDVHANNNERMYLAGMNSVLKKLDPQAKELAFAASAREVDELLNAQQESAFLAGPEKSGRRGEESEDEDRRRRRSHRGRGDEAVETLLRMAAAAV</original>
    <variation>ARTRSIKSLFINSNQLSTHK</variation>
    <location>
        <begin position="231"/>
        <end position="562"/>
    </location>
</feature>
<protein>
    <recommendedName>
        <fullName evidence="6">63 kDa globulin-like protein</fullName>
    </recommendedName>
    <allergenName>Ory s GLP63</allergenName>
</protein>
<sequence length="562" mass="63428">MATRARATILLLLAAVLFAAAAAASGEDRRRETSLRRCLQRCEQDRPPYERARCVQECKDQQQQQQERRREHGGHDDDRRDRDRRGEGSSEEEDEGRERGSRRRPYVFGRRSFRQVVRSDQGSVRLLPPFHQASSLLRGIKNYRVAVLEANPRSFVMPTHTDAHCICYVAQGEGVVAIIENGEKWSYAIRQGDVFVAPAGTINYLANTDGRRKLIVTKILHTISVPGQIQFFFAPGGRNPESFLSSFSKGVQRAAFKISEEKLEKLLGKQDKGVIIRASEEQVRELRRHASEGGHGPHWPLPPFGESSRGPFNILEQRPRFANRHGRLYEADARSFHDLAEHDIRVAVVNITAGSMNAPFYNTRSVKVAYVLDGEGEAEIVCPHLSRGGRGGESEERRRERGKGKWREEEEEEEEQQKGQEEEEEEQVGQGYETIRARLSRGTVFVVPSGHPIVVTSSRDSTLQIVCFDVHANNNERMYLAGMNSVLKKLDPQAKELAFAASAREVDELLNAQQESAFLAGPEKSGRRGEESEDEDRRRRRSHRGRGDEAVETLLRMAAAAV</sequence>
<keyword id="KW-0020">Allergen</keyword>
<keyword id="KW-0025">Alternative splicing</keyword>
<keyword id="KW-0325">Glycoprotein</keyword>
<keyword id="KW-1185">Reference proteome</keyword>
<keyword id="KW-0964">Secreted</keyword>
<keyword id="KW-0708">Seed storage protein</keyword>
<keyword id="KW-0732">Signal</keyword>
<keyword id="KW-0758">Storage protein</keyword>
<evidence type="ECO:0000255" key="1"/>
<evidence type="ECO:0000255" key="2">
    <source>
        <dbReference type="PROSITE-ProRule" id="PRU00498"/>
    </source>
</evidence>
<evidence type="ECO:0000256" key="3">
    <source>
        <dbReference type="SAM" id="MobiDB-lite"/>
    </source>
</evidence>
<evidence type="ECO:0000269" key="4">
    <source>
    </source>
</evidence>
<evidence type="ECO:0000269" key="5">
    <source>
    </source>
</evidence>
<evidence type="ECO:0000305" key="6"/>
<evidence type="ECO:0000312" key="7">
    <source>
        <dbReference type="EMBL" id="AAS07324.1"/>
    </source>
</evidence>
<evidence type="ECO:0000312" key="8">
    <source>
        <dbReference type="EMBL" id="ABF98039.1"/>
    </source>
</evidence>
<evidence type="ECO:0000312" key="9">
    <source>
        <dbReference type="EMBL" id="BAS85618.1"/>
    </source>
</evidence>
<comment type="function">
    <text evidence="6">Seed storage protein.</text>
</comment>
<comment type="subcellular location">
    <subcellularLocation>
        <location evidence="6">Secreted</location>
    </subcellularLocation>
</comment>
<comment type="alternative products">
    <event type="alternative splicing"/>
    <isoform>
        <id>Q75GX9-1</id>
        <name>1</name>
        <sequence type="displayed"/>
    </isoform>
    <isoform>
        <id>Q75GX9-2</id>
        <name>2</name>
        <sequence type="described" ref="VSP_058381"/>
    </isoform>
</comment>
<comment type="allergen">
    <text evidence="4 5">Causes an allergic reaction in human. Binds to IgE.</text>
</comment>
<comment type="similarity">
    <text evidence="6">Belongs to the 7S seed storage protein family.</text>
</comment>
<comment type="sequence caution" evidence="6">
    <conflict type="erroneous gene model prediction">
        <sequence resource="EMBL-CDS" id="BAH92302"/>
    </conflict>
</comment>